<feature type="chain" id="PRO_0000301326" description="Phosphoglucosamine mutase">
    <location>
        <begin position="1"/>
        <end position="448"/>
    </location>
</feature>
<feature type="active site" description="Phosphoserine intermediate" evidence="1">
    <location>
        <position position="108"/>
    </location>
</feature>
<feature type="binding site" description="via phosphate group" evidence="1">
    <location>
        <position position="108"/>
    </location>
    <ligand>
        <name>Mg(2+)</name>
        <dbReference type="ChEBI" id="CHEBI:18420"/>
    </ligand>
</feature>
<feature type="binding site" evidence="1">
    <location>
        <position position="247"/>
    </location>
    <ligand>
        <name>Mg(2+)</name>
        <dbReference type="ChEBI" id="CHEBI:18420"/>
    </ligand>
</feature>
<feature type="binding site" evidence="1">
    <location>
        <position position="249"/>
    </location>
    <ligand>
        <name>Mg(2+)</name>
        <dbReference type="ChEBI" id="CHEBI:18420"/>
    </ligand>
</feature>
<feature type="binding site" evidence="1">
    <location>
        <position position="251"/>
    </location>
    <ligand>
        <name>Mg(2+)</name>
        <dbReference type="ChEBI" id="CHEBI:18420"/>
    </ligand>
</feature>
<feature type="modified residue" description="Phosphoserine" evidence="1">
    <location>
        <position position="108"/>
    </location>
</feature>
<proteinExistence type="inferred from homology"/>
<name>GLMM_HERAR</name>
<accession>A4G4B3</accession>
<dbReference type="EC" id="5.4.2.10" evidence="1"/>
<dbReference type="EMBL" id="CU207211">
    <property type="protein sequence ID" value="CAL61350.1"/>
    <property type="molecule type" value="Genomic_DNA"/>
</dbReference>
<dbReference type="SMR" id="A4G4B3"/>
<dbReference type="STRING" id="204773.HEAR1172"/>
<dbReference type="KEGG" id="har:HEAR1172"/>
<dbReference type="eggNOG" id="COG1109">
    <property type="taxonomic scope" value="Bacteria"/>
</dbReference>
<dbReference type="HOGENOM" id="CLU_016950_7_0_4"/>
<dbReference type="OrthoDB" id="9803322at2"/>
<dbReference type="Proteomes" id="UP000006697">
    <property type="component" value="Chromosome"/>
</dbReference>
<dbReference type="GO" id="GO:0005829">
    <property type="term" value="C:cytosol"/>
    <property type="evidence" value="ECO:0007669"/>
    <property type="project" value="TreeGrafter"/>
</dbReference>
<dbReference type="GO" id="GO:0000287">
    <property type="term" value="F:magnesium ion binding"/>
    <property type="evidence" value="ECO:0007669"/>
    <property type="project" value="UniProtKB-UniRule"/>
</dbReference>
<dbReference type="GO" id="GO:0008966">
    <property type="term" value="F:phosphoglucosamine mutase activity"/>
    <property type="evidence" value="ECO:0007669"/>
    <property type="project" value="UniProtKB-UniRule"/>
</dbReference>
<dbReference type="GO" id="GO:0004615">
    <property type="term" value="F:phosphomannomutase activity"/>
    <property type="evidence" value="ECO:0007669"/>
    <property type="project" value="TreeGrafter"/>
</dbReference>
<dbReference type="GO" id="GO:0005975">
    <property type="term" value="P:carbohydrate metabolic process"/>
    <property type="evidence" value="ECO:0007669"/>
    <property type="project" value="InterPro"/>
</dbReference>
<dbReference type="GO" id="GO:0009252">
    <property type="term" value="P:peptidoglycan biosynthetic process"/>
    <property type="evidence" value="ECO:0007669"/>
    <property type="project" value="TreeGrafter"/>
</dbReference>
<dbReference type="GO" id="GO:0006048">
    <property type="term" value="P:UDP-N-acetylglucosamine biosynthetic process"/>
    <property type="evidence" value="ECO:0007669"/>
    <property type="project" value="TreeGrafter"/>
</dbReference>
<dbReference type="CDD" id="cd05802">
    <property type="entry name" value="GlmM"/>
    <property type="match status" value="1"/>
</dbReference>
<dbReference type="FunFam" id="3.30.310.50:FF:000001">
    <property type="entry name" value="Phosphoglucosamine mutase"/>
    <property type="match status" value="1"/>
</dbReference>
<dbReference type="FunFam" id="3.40.120.10:FF:000001">
    <property type="entry name" value="Phosphoglucosamine mutase"/>
    <property type="match status" value="1"/>
</dbReference>
<dbReference type="FunFam" id="3.40.120.10:FF:000003">
    <property type="entry name" value="Phosphoglucosamine mutase"/>
    <property type="match status" value="1"/>
</dbReference>
<dbReference type="Gene3D" id="3.40.120.10">
    <property type="entry name" value="Alpha-D-Glucose-1,6-Bisphosphate, subunit A, domain 3"/>
    <property type="match status" value="3"/>
</dbReference>
<dbReference type="Gene3D" id="3.30.310.50">
    <property type="entry name" value="Alpha-D-phosphohexomutase, C-terminal domain"/>
    <property type="match status" value="1"/>
</dbReference>
<dbReference type="HAMAP" id="MF_01554_B">
    <property type="entry name" value="GlmM_B"/>
    <property type="match status" value="1"/>
</dbReference>
<dbReference type="InterPro" id="IPR005844">
    <property type="entry name" value="A-D-PHexomutase_a/b/a-I"/>
</dbReference>
<dbReference type="InterPro" id="IPR016055">
    <property type="entry name" value="A-D-PHexomutase_a/b/a-I/II/III"/>
</dbReference>
<dbReference type="InterPro" id="IPR005845">
    <property type="entry name" value="A-D-PHexomutase_a/b/a-II"/>
</dbReference>
<dbReference type="InterPro" id="IPR005846">
    <property type="entry name" value="A-D-PHexomutase_a/b/a-III"/>
</dbReference>
<dbReference type="InterPro" id="IPR005843">
    <property type="entry name" value="A-D-PHexomutase_C"/>
</dbReference>
<dbReference type="InterPro" id="IPR036900">
    <property type="entry name" value="A-D-PHexomutase_C_sf"/>
</dbReference>
<dbReference type="InterPro" id="IPR016066">
    <property type="entry name" value="A-D-PHexomutase_CS"/>
</dbReference>
<dbReference type="InterPro" id="IPR005841">
    <property type="entry name" value="Alpha-D-phosphohexomutase_SF"/>
</dbReference>
<dbReference type="InterPro" id="IPR006352">
    <property type="entry name" value="GlmM_bact"/>
</dbReference>
<dbReference type="InterPro" id="IPR050060">
    <property type="entry name" value="Phosphoglucosamine_mutase"/>
</dbReference>
<dbReference type="NCBIfam" id="TIGR01455">
    <property type="entry name" value="glmM"/>
    <property type="match status" value="1"/>
</dbReference>
<dbReference type="NCBIfam" id="NF008139">
    <property type="entry name" value="PRK10887.1"/>
    <property type="match status" value="1"/>
</dbReference>
<dbReference type="PANTHER" id="PTHR42946:SF1">
    <property type="entry name" value="PHOSPHOGLUCOMUTASE (ALPHA-D-GLUCOSE-1,6-BISPHOSPHATE-DEPENDENT)"/>
    <property type="match status" value="1"/>
</dbReference>
<dbReference type="PANTHER" id="PTHR42946">
    <property type="entry name" value="PHOSPHOHEXOSE MUTASE"/>
    <property type="match status" value="1"/>
</dbReference>
<dbReference type="Pfam" id="PF02878">
    <property type="entry name" value="PGM_PMM_I"/>
    <property type="match status" value="1"/>
</dbReference>
<dbReference type="Pfam" id="PF02879">
    <property type="entry name" value="PGM_PMM_II"/>
    <property type="match status" value="1"/>
</dbReference>
<dbReference type="Pfam" id="PF02880">
    <property type="entry name" value="PGM_PMM_III"/>
    <property type="match status" value="1"/>
</dbReference>
<dbReference type="Pfam" id="PF00408">
    <property type="entry name" value="PGM_PMM_IV"/>
    <property type="match status" value="1"/>
</dbReference>
<dbReference type="PRINTS" id="PR00509">
    <property type="entry name" value="PGMPMM"/>
</dbReference>
<dbReference type="SUPFAM" id="SSF55957">
    <property type="entry name" value="Phosphoglucomutase, C-terminal domain"/>
    <property type="match status" value="1"/>
</dbReference>
<dbReference type="SUPFAM" id="SSF53738">
    <property type="entry name" value="Phosphoglucomutase, first 3 domains"/>
    <property type="match status" value="3"/>
</dbReference>
<dbReference type="PROSITE" id="PS00710">
    <property type="entry name" value="PGM_PMM"/>
    <property type="match status" value="1"/>
</dbReference>
<sequence length="448" mass="47690">MTRKYFGTDGVRGKVGVSPITPDFVMRLGYAAGSVLTKFETTKTPGSRPTVLIGKDTRISGYMLEAALEAGFSAAGVDVMLAGPVPTPAVAYLTRALRLSAGVVISASHNPYDDNGIKFFSASGNKLADATELEIEAALDVPMSCVASEKLGRVKRLDDARGRYIEFCKSTFPNELDLRGTKIVVDCAHGAAYHIAPDVFHELGAEVVAIGNQPSGFNINDKVGATAPAALVEAVRANQADIGIALDGDADRLIVVDASGRIFTGDEMLYIMVKDRMSVQAVAGAVGTLMTNMALEVAFRKMGIGFVRANVGDRYVLEALQERGWLLGGEGSGHMLFLDKHTTGDGIISALQILSALKRSGKTLAQLTADIAMFPQTLINVKVRPGFDWKKNAGLLAEKEQVEAELGDEGRVLIRASGTEPLIRVMVEAKNGEMADKMARRIAATLTV</sequence>
<organism>
    <name type="scientific">Herminiimonas arsenicoxydans</name>
    <dbReference type="NCBI Taxonomy" id="204773"/>
    <lineage>
        <taxon>Bacteria</taxon>
        <taxon>Pseudomonadati</taxon>
        <taxon>Pseudomonadota</taxon>
        <taxon>Betaproteobacteria</taxon>
        <taxon>Burkholderiales</taxon>
        <taxon>Oxalobacteraceae</taxon>
        <taxon>Herminiimonas</taxon>
    </lineage>
</organism>
<evidence type="ECO:0000255" key="1">
    <source>
        <dbReference type="HAMAP-Rule" id="MF_01554"/>
    </source>
</evidence>
<gene>
    <name evidence="1" type="primary">glmM</name>
    <name type="ordered locus">HEAR1172</name>
</gene>
<reference key="1">
    <citation type="journal article" date="2007" name="PLoS Genet.">
        <title>A tale of two oxidation states: bacterial colonization of arsenic-rich environments.</title>
        <authorList>
            <person name="Muller D."/>
            <person name="Medigue C."/>
            <person name="Koechler S."/>
            <person name="Barbe V."/>
            <person name="Barakat M."/>
            <person name="Talla E."/>
            <person name="Bonnefoy V."/>
            <person name="Krin E."/>
            <person name="Arsene-Ploetze F."/>
            <person name="Carapito C."/>
            <person name="Chandler M."/>
            <person name="Cournoyer B."/>
            <person name="Cruveiller S."/>
            <person name="Dossat C."/>
            <person name="Duval S."/>
            <person name="Heymann M."/>
            <person name="Leize E."/>
            <person name="Lieutaud A."/>
            <person name="Lievremont D."/>
            <person name="Makita Y."/>
            <person name="Mangenot S."/>
            <person name="Nitschke W."/>
            <person name="Ortet P."/>
            <person name="Perdrial N."/>
            <person name="Schoepp B."/>
            <person name="Siguier P."/>
            <person name="Simeonova D.D."/>
            <person name="Rouy Z."/>
            <person name="Segurens B."/>
            <person name="Turlin E."/>
            <person name="Vallenet D."/>
            <person name="van Dorsselaer A."/>
            <person name="Weiss S."/>
            <person name="Weissenbach J."/>
            <person name="Lett M.-C."/>
            <person name="Danchin A."/>
            <person name="Bertin P.N."/>
        </authorList>
    </citation>
    <scope>NUCLEOTIDE SEQUENCE [LARGE SCALE GENOMIC DNA]</scope>
    <source>
        <strain>ULPAs1</strain>
    </source>
</reference>
<comment type="function">
    <text evidence="1">Catalyzes the conversion of glucosamine-6-phosphate to glucosamine-1-phosphate.</text>
</comment>
<comment type="catalytic activity">
    <reaction evidence="1">
        <text>alpha-D-glucosamine 1-phosphate = D-glucosamine 6-phosphate</text>
        <dbReference type="Rhea" id="RHEA:23424"/>
        <dbReference type="ChEBI" id="CHEBI:58516"/>
        <dbReference type="ChEBI" id="CHEBI:58725"/>
        <dbReference type="EC" id="5.4.2.10"/>
    </reaction>
</comment>
<comment type="cofactor">
    <cofactor evidence="1">
        <name>Mg(2+)</name>
        <dbReference type="ChEBI" id="CHEBI:18420"/>
    </cofactor>
    <text evidence="1">Binds 1 Mg(2+) ion per subunit.</text>
</comment>
<comment type="PTM">
    <text evidence="1">Activated by phosphorylation.</text>
</comment>
<comment type="similarity">
    <text evidence="1">Belongs to the phosphohexose mutase family.</text>
</comment>
<protein>
    <recommendedName>
        <fullName evidence="1">Phosphoglucosamine mutase</fullName>
        <ecNumber evidence="1">5.4.2.10</ecNumber>
    </recommendedName>
</protein>
<keyword id="KW-0413">Isomerase</keyword>
<keyword id="KW-0460">Magnesium</keyword>
<keyword id="KW-0479">Metal-binding</keyword>
<keyword id="KW-0597">Phosphoprotein</keyword>
<keyword id="KW-1185">Reference proteome</keyword>